<gene>
    <name evidence="1" type="primary">moaC</name>
    <name type="ordered locus">BBR47_41870</name>
</gene>
<sequence>MTDQLTHFNEQNRARMVDVSEKDVTKRVAVAESQISMKPETLARIREGRIEKGDVLAVAQVAGVMAAKKTWEIIPMCHPLPLTGIDIQFAFEDETTLAITGTVKTTGKTGVEMEALTAVSVAALTVYDMCKAMDKEMIIGPTSLQSKTGGKSGDFHRGEK</sequence>
<feature type="chain" id="PRO_1000164880" description="Cyclic pyranopterin monophosphate synthase">
    <location>
        <begin position="1"/>
        <end position="160"/>
    </location>
</feature>
<feature type="active site" evidence="1">
    <location>
        <position position="128"/>
    </location>
</feature>
<feature type="binding site" evidence="1">
    <location>
        <begin position="76"/>
        <end position="78"/>
    </location>
    <ligand>
        <name>substrate</name>
    </ligand>
</feature>
<feature type="binding site" evidence="1">
    <location>
        <begin position="113"/>
        <end position="114"/>
    </location>
    <ligand>
        <name>substrate</name>
    </ligand>
</feature>
<name>MOAC_BREBN</name>
<comment type="function">
    <text evidence="1">Catalyzes the conversion of (8S)-3',8-cyclo-7,8-dihydroguanosine 5'-triphosphate to cyclic pyranopterin monophosphate (cPMP).</text>
</comment>
<comment type="catalytic activity">
    <reaction evidence="1">
        <text>(8S)-3',8-cyclo-7,8-dihydroguanosine 5'-triphosphate = cyclic pyranopterin phosphate + diphosphate</text>
        <dbReference type="Rhea" id="RHEA:49580"/>
        <dbReference type="ChEBI" id="CHEBI:33019"/>
        <dbReference type="ChEBI" id="CHEBI:59648"/>
        <dbReference type="ChEBI" id="CHEBI:131766"/>
        <dbReference type="EC" id="4.6.1.17"/>
    </reaction>
</comment>
<comment type="pathway">
    <text evidence="1">Cofactor biosynthesis; molybdopterin biosynthesis.</text>
</comment>
<comment type="subunit">
    <text evidence="1">Homohexamer; trimer of dimers.</text>
</comment>
<comment type="similarity">
    <text evidence="1">Belongs to the MoaC family.</text>
</comment>
<organism>
    <name type="scientific">Brevibacillus brevis (strain 47 / JCM 6285 / NBRC 100599)</name>
    <dbReference type="NCBI Taxonomy" id="358681"/>
    <lineage>
        <taxon>Bacteria</taxon>
        <taxon>Bacillati</taxon>
        <taxon>Bacillota</taxon>
        <taxon>Bacilli</taxon>
        <taxon>Bacillales</taxon>
        <taxon>Paenibacillaceae</taxon>
        <taxon>Brevibacillus</taxon>
    </lineage>
</organism>
<accession>C0ZHP0</accession>
<keyword id="KW-0456">Lyase</keyword>
<keyword id="KW-0501">Molybdenum cofactor biosynthesis</keyword>
<keyword id="KW-1185">Reference proteome</keyword>
<dbReference type="EC" id="4.6.1.17" evidence="1"/>
<dbReference type="EMBL" id="AP008955">
    <property type="protein sequence ID" value="BAH45164.1"/>
    <property type="molecule type" value="Genomic_DNA"/>
</dbReference>
<dbReference type="RefSeq" id="WP_015892432.1">
    <property type="nucleotide sequence ID" value="NC_012491.1"/>
</dbReference>
<dbReference type="SMR" id="C0ZHP0"/>
<dbReference type="STRING" id="358681.BBR47_41870"/>
<dbReference type="KEGG" id="bbe:BBR47_41870"/>
<dbReference type="eggNOG" id="COG0315">
    <property type="taxonomic scope" value="Bacteria"/>
</dbReference>
<dbReference type="HOGENOM" id="CLU_074693_1_1_9"/>
<dbReference type="UniPathway" id="UPA00344"/>
<dbReference type="Proteomes" id="UP000001877">
    <property type="component" value="Chromosome"/>
</dbReference>
<dbReference type="GO" id="GO:0061799">
    <property type="term" value="F:cyclic pyranopterin monophosphate synthase activity"/>
    <property type="evidence" value="ECO:0007669"/>
    <property type="project" value="UniProtKB-UniRule"/>
</dbReference>
<dbReference type="GO" id="GO:0006777">
    <property type="term" value="P:Mo-molybdopterin cofactor biosynthetic process"/>
    <property type="evidence" value="ECO:0007669"/>
    <property type="project" value="UniProtKB-UniRule"/>
</dbReference>
<dbReference type="CDD" id="cd01420">
    <property type="entry name" value="MoaC_PE"/>
    <property type="match status" value="1"/>
</dbReference>
<dbReference type="Gene3D" id="3.30.70.640">
    <property type="entry name" value="Molybdopterin cofactor biosynthesis C (MoaC) domain"/>
    <property type="match status" value="1"/>
</dbReference>
<dbReference type="HAMAP" id="MF_01224_B">
    <property type="entry name" value="MoaC_B"/>
    <property type="match status" value="1"/>
</dbReference>
<dbReference type="InterPro" id="IPR023045">
    <property type="entry name" value="MoaC"/>
</dbReference>
<dbReference type="InterPro" id="IPR047594">
    <property type="entry name" value="MoaC_bact/euk"/>
</dbReference>
<dbReference type="InterPro" id="IPR036522">
    <property type="entry name" value="MoaC_sf"/>
</dbReference>
<dbReference type="InterPro" id="IPR050105">
    <property type="entry name" value="MoCo_biosynth_MoaA/MoaC"/>
</dbReference>
<dbReference type="InterPro" id="IPR002820">
    <property type="entry name" value="Mopterin_CF_biosynth-C_dom"/>
</dbReference>
<dbReference type="NCBIfam" id="TIGR00581">
    <property type="entry name" value="moaC"/>
    <property type="match status" value="1"/>
</dbReference>
<dbReference type="NCBIfam" id="NF006870">
    <property type="entry name" value="PRK09364.1"/>
    <property type="match status" value="1"/>
</dbReference>
<dbReference type="NCBIfam" id="NF008999">
    <property type="entry name" value="PRK12343.1"/>
    <property type="match status" value="1"/>
</dbReference>
<dbReference type="PANTHER" id="PTHR22960:SF29">
    <property type="entry name" value="CYCLIC PYRANOPTERIN MONOPHOSPHATE SYNTHASE"/>
    <property type="match status" value="1"/>
</dbReference>
<dbReference type="PANTHER" id="PTHR22960">
    <property type="entry name" value="MOLYBDOPTERIN COFACTOR SYNTHESIS PROTEIN A"/>
    <property type="match status" value="1"/>
</dbReference>
<dbReference type="Pfam" id="PF01967">
    <property type="entry name" value="MoaC"/>
    <property type="match status" value="1"/>
</dbReference>
<dbReference type="SUPFAM" id="SSF55040">
    <property type="entry name" value="Molybdenum cofactor biosynthesis protein C, MoaC"/>
    <property type="match status" value="1"/>
</dbReference>
<proteinExistence type="inferred from homology"/>
<reference key="1">
    <citation type="submission" date="2005-03" db="EMBL/GenBank/DDBJ databases">
        <title>Brevibacillus brevis strain 47, complete genome.</title>
        <authorList>
            <person name="Hosoyama A."/>
            <person name="Yamada R."/>
            <person name="Hongo Y."/>
            <person name="Terui Y."/>
            <person name="Ankai A."/>
            <person name="Masuyama W."/>
            <person name="Sekiguchi M."/>
            <person name="Takeda T."/>
            <person name="Asano K."/>
            <person name="Ohji S."/>
            <person name="Ichikawa N."/>
            <person name="Narita S."/>
            <person name="Aoki N."/>
            <person name="Miura H."/>
            <person name="Matsushita S."/>
            <person name="Sekigawa T."/>
            <person name="Yamagata H."/>
            <person name="Yoshikawa H."/>
            <person name="Udaka S."/>
            <person name="Tanikawa S."/>
            <person name="Fujita N."/>
        </authorList>
    </citation>
    <scope>NUCLEOTIDE SEQUENCE [LARGE SCALE GENOMIC DNA]</scope>
    <source>
        <strain>47 / JCM 6285 / NBRC 100599</strain>
    </source>
</reference>
<evidence type="ECO:0000255" key="1">
    <source>
        <dbReference type="HAMAP-Rule" id="MF_01224"/>
    </source>
</evidence>
<protein>
    <recommendedName>
        <fullName evidence="1">Cyclic pyranopterin monophosphate synthase</fullName>
        <ecNumber evidence="1">4.6.1.17</ecNumber>
    </recommendedName>
    <alternativeName>
        <fullName evidence="1">Molybdenum cofactor biosynthesis protein C</fullName>
    </alternativeName>
</protein>